<name>SYH_MOOTA</name>
<protein>
    <recommendedName>
        <fullName evidence="1">Histidine--tRNA ligase</fullName>
        <ecNumber evidence="1">6.1.1.21</ecNumber>
    </recommendedName>
    <alternativeName>
        <fullName evidence="1">Histidyl-tRNA synthetase</fullName>
        <shortName evidence="1">HisRS</shortName>
    </alternativeName>
</protein>
<gene>
    <name evidence="1" type="primary">hisS</name>
    <name type="ordered locus">Moth_1677</name>
</gene>
<organism>
    <name type="scientific">Moorella thermoacetica (strain ATCC 39073 / JCM 9320)</name>
    <dbReference type="NCBI Taxonomy" id="264732"/>
    <lineage>
        <taxon>Bacteria</taxon>
        <taxon>Bacillati</taxon>
        <taxon>Bacillota</taxon>
        <taxon>Clostridia</taxon>
        <taxon>Moorellales</taxon>
        <taxon>Moorellaceae</taxon>
        <taxon>Moorella</taxon>
    </lineage>
</organism>
<accession>Q2RHW0</accession>
<reference key="1">
    <citation type="journal article" date="2008" name="Environ. Microbiol.">
        <title>The complete genome sequence of Moorella thermoacetica (f. Clostridium thermoaceticum).</title>
        <authorList>
            <person name="Pierce E."/>
            <person name="Xie G."/>
            <person name="Barabote R.D."/>
            <person name="Saunders E."/>
            <person name="Han C.S."/>
            <person name="Detter J.C."/>
            <person name="Richardson P."/>
            <person name="Brettin T.S."/>
            <person name="Das A."/>
            <person name="Ljungdahl L.G."/>
            <person name="Ragsdale S.W."/>
        </authorList>
    </citation>
    <scope>NUCLEOTIDE SEQUENCE [LARGE SCALE GENOMIC DNA]</scope>
    <source>
        <strain>ATCC 39073 / JCM 9320</strain>
    </source>
</reference>
<comment type="catalytic activity">
    <reaction evidence="1">
        <text>tRNA(His) + L-histidine + ATP = L-histidyl-tRNA(His) + AMP + diphosphate + H(+)</text>
        <dbReference type="Rhea" id="RHEA:17313"/>
        <dbReference type="Rhea" id="RHEA-COMP:9665"/>
        <dbReference type="Rhea" id="RHEA-COMP:9689"/>
        <dbReference type="ChEBI" id="CHEBI:15378"/>
        <dbReference type="ChEBI" id="CHEBI:30616"/>
        <dbReference type="ChEBI" id="CHEBI:33019"/>
        <dbReference type="ChEBI" id="CHEBI:57595"/>
        <dbReference type="ChEBI" id="CHEBI:78442"/>
        <dbReference type="ChEBI" id="CHEBI:78527"/>
        <dbReference type="ChEBI" id="CHEBI:456215"/>
        <dbReference type="EC" id="6.1.1.21"/>
    </reaction>
</comment>
<comment type="subunit">
    <text evidence="1">Homodimer.</text>
</comment>
<comment type="subcellular location">
    <subcellularLocation>
        <location evidence="1">Cytoplasm</location>
    </subcellularLocation>
</comment>
<comment type="similarity">
    <text evidence="1">Belongs to the class-II aminoacyl-tRNA synthetase family.</text>
</comment>
<proteinExistence type="inferred from homology"/>
<keyword id="KW-0030">Aminoacyl-tRNA synthetase</keyword>
<keyword id="KW-0067">ATP-binding</keyword>
<keyword id="KW-0963">Cytoplasm</keyword>
<keyword id="KW-0436">Ligase</keyword>
<keyword id="KW-0547">Nucleotide-binding</keyword>
<keyword id="KW-0648">Protein biosynthesis</keyword>
<evidence type="ECO:0000255" key="1">
    <source>
        <dbReference type="HAMAP-Rule" id="MF_00127"/>
    </source>
</evidence>
<sequence>MLTSRPRGTEDILPEEVGRWYLLENTAREVSRLYGYREIRTPIFEHTELFNRGVGDTSDIVEKEMYTFIDRGDRSLTLRPEGTAPVVRAFVEHSLEARGLPVKLFYLGPMFRYGRPQAGRLRQFHQFGVEAFGSRDPALDAEVIALAMDFYTRLGLKDLELHLNSVGCPACRPAHREKLKAYLRPRLEELCPTCQGRFERNPLRIFDCKSPACQEIVREAPTVTASLCPDCAGHFHRVQEYLKALGIEFILDEHLVRGLDYYTKTAFEIMVKGIGAQSSIGGGGRYDGLVAALGGKQVPGIGFGLGLERVLLALEIQGQEPPPEGGVDVLVVTAGTGVDLAAFRLLAGLRAAGIRADKDYLERSLKGQMKYANRYPARMAVILGEEELARGRVSVRRLDAGSQEEVPLAAVVDYCRKMKESGW</sequence>
<feature type="chain" id="PRO_1000016395" description="Histidine--tRNA ligase">
    <location>
        <begin position="1"/>
        <end position="423"/>
    </location>
</feature>
<dbReference type="EC" id="6.1.1.21" evidence="1"/>
<dbReference type="EMBL" id="CP000232">
    <property type="protein sequence ID" value="ABC19979.1"/>
    <property type="molecule type" value="Genomic_DNA"/>
</dbReference>
<dbReference type="RefSeq" id="YP_430522.1">
    <property type="nucleotide sequence ID" value="NC_007644.1"/>
</dbReference>
<dbReference type="SMR" id="Q2RHW0"/>
<dbReference type="STRING" id="264732.Moth_1677"/>
<dbReference type="EnsemblBacteria" id="ABC19979">
    <property type="protein sequence ID" value="ABC19979"/>
    <property type="gene ID" value="Moth_1677"/>
</dbReference>
<dbReference type="KEGG" id="mta:Moth_1677"/>
<dbReference type="PATRIC" id="fig|264732.11.peg.1817"/>
<dbReference type="eggNOG" id="COG0124">
    <property type="taxonomic scope" value="Bacteria"/>
</dbReference>
<dbReference type="HOGENOM" id="CLU_025113_1_1_9"/>
<dbReference type="OrthoDB" id="9800814at2"/>
<dbReference type="GO" id="GO:0005737">
    <property type="term" value="C:cytoplasm"/>
    <property type="evidence" value="ECO:0007669"/>
    <property type="project" value="UniProtKB-SubCell"/>
</dbReference>
<dbReference type="GO" id="GO:0005524">
    <property type="term" value="F:ATP binding"/>
    <property type="evidence" value="ECO:0007669"/>
    <property type="project" value="UniProtKB-UniRule"/>
</dbReference>
<dbReference type="GO" id="GO:0140096">
    <property type="term" value="F:catalytic activity, acting on a protein"/>
    <property type="evidence" value="ECO:0007669"/>
    <property type="project" value="UniProtKB-ARBA"/>
</dbReference>
<dbReference type="GO" id="GO:0004821">
    <property type="term" value="F:histidine-tRNA ligase activity"/>
    <property type="evidence" value="ECO:0007669"/>
    <property type="project" value="UniProtKB-UniRule"/>
</dbReference>
<dbReference type="GO" id="GO:0016740">
    <property type="term" value="F:transferase activity"/>
    <property type="evidence" value="ECO:0007669"/>
    <property type="project" value="UniProtKB-ARBA"/>
</dbReference>
<dbReference type="GO" id="GO:0006427">
    <property type="term" value="P:histidyl-tRNA aminoacylation"/>
    <property type="evidence" value="ECO:0007669"/>
    <property type="project" value="UniProtKB-UniRule"/>
</dbReference>
<dbReference type="CDD" id="cd00773">
    <property type="entry name" value="HisRS-like_core"/>
    <property type="match status" value="1"/>
</dbReference>
<dbReference type="CDD" id="cd00859">
    <property type="entry name" value="HisRS_anticodon"/>
    <property type="match status" value="1"/>
</dbReference>
<dbReference type="FunFam" id="3.30.930.10:FF:000005">
    <property type="entry name" value="Histidine--tRNA ligase"/>
    <property type="match status" value="1"/>
</dbReference>
<dbReference type="Gene3D" id="3.40.50.800">
    <property type="entry name" value="Anticodon-binding domain"/>
    <property type="match status" value="1"/>
</dbReference>
<dbReference type="Gene3D" id="3.30.930.10">
    <property type="entry name" value="Bira Bifunctional Protein, Domain 2"/>
    <property type="match status" value="1"/>
</dbReference>
<dbReference type="HAMAP" id="MF_00127">
    <property type="entry name" value="His_tRNA_synth"/>
    <property type="match status" value="1"/>
</dbReference>
<dbReference type="InterPro" id="IPR006195">
    <property type="entry name" value="aa-tRNA-synth_II"/>
</dbReference>
<dbReference type="InterPro" id="IPR045864">
    <property type="entry name" value="aa-tRNA-synth_II/BPL/LPL"/>
</dbReference>
<dbReference type="InterPro" id="IPR004154">
    <property type="entry name" value="Anticodon-bd"/>
</dbReference>
<dbReference type="InterPro" id="IPR036621">
    <property type="entry name" value="Anticodon-bd_dom_sf"/>
</dbReference>
<dbReference type="InterPro" id="IPR015807">
    <property type="entry name" value="His-tRNA-ligase"/>
</dbReference>
<dbReference type="InterPro" id="IPR041715">
    <property type="entry name" value="HisRS-like_core"/>
</dbReference>
<dbReference type="InterPro" id="IPR004516">
    <property type="entry name" value="HisRS/HisZ"/>
</dbReference>
<dbReference type="InterPro" id="IPR033656">
    <property type="entry name" value="HisRS_anticodon"/>
</dbReference>
<dbReference type="NCBIfam" id="TIGR00442">
    <property type="entry name" value="hisS"/>
    <property type="match status" value="1"/>
</dbReference>
<dbReference type="PANTHER" id="PTHR43707:SF1">
    <property type="entry name" value="HISTIDINE--TRNA LIGASE, MITOCHONDRIAL-RELATED"/>
    <property type="match status" value="1"/>
</dbReference>
<dbReference type="PANTHER" id="PTHR43707">
    <property type="entry name" value="HISTIDYL-TRNA SYNTHETASE"/>
    <property type="match status" value="1"/>
</dbReference>
<dbReference type="Pfam" id="PF03129">
    <property type="entry name" value="HGTP_anticodon"/>
    <property type="match status" value="1"/>
</dbReference>
<dbReference type="Pfam" id="PF13393">
    <property type="entry name" value="tRNA-synt_His"/>
    <property type="match status" value="1"/>
</dbReference>
<dbReference type="PIRSF" id="PIRSF001549">
    <property type="entry name" value="His-tRNA_synth"/>
    <property type="match status" value="1"/>
</dbReference>
<dbReference type="SUPFAM" id="SSF52954">
    <property type="entry name" value="Class II aaRS ABD-related"/>
    <property type="match status" value="1"/>
</dbReference>
<dbReference type="SUPFAM" id="SSF55681">
    <property type="entry name" value="Class II aaRS and biotin synthetases"/>
    <property type="match status" value="1"/>
</dbReference>
<dbReference type="PROSITE" id="PS50862">
    <property type="entry name" value="AA_TRNA_LIGASE_II"/>
    <property type="match status" value="1"/>
</dbReference>